<accession>Q5RFD3</accession>
<reference key="1">
    <citation type="submission" date="2004-11" db="EMBL/GenBank/DDBJ databases">
        <authorList>
            <consortium name="The German cDNA consortium"/>
        </authorList>
    </citation>
    <scope>NUCLEOTIDE SEQUENCE [LARGE SCALE MRNA]</scope>
    <source>
        <tissue>Kidney</tissue>
    </source>
</reference>
<keyword id="KW-0007">Acetylation</keyword>
<keyword id="KW-0053">Apoptosis</keyword>
<keyword id="KW-0131">Cell cycle</keyword>
<keyword id="KW-0963">Cytoplasm</keyword>
<keyword id="KW-0539">Nucleus</keyword>
<keyword id="KW-0597">Phosphoprotein</keyword>
<keyword id="KW-0647">Proteasome</keyword>
<keyword id="KW-1185">Reference proteome</keyword>
<gene>
    <name type="primary">PSME3</name>
</gene>
<name>PSME3_PONAB</name>
<organism>
    <name type="scientific">Pongo abelii</name>
    <name type="common">Sumatran orangutan</name>
    <name type="synonym">Pongo pygmaeus abelii</name>
    <dbReference type="NCBI Taxonomy" id="9601"/>
    <lineage>
        <taxon>Eukaryota</taxon>
        <taxon>Metazoa</taxon>
        <taxon>Chordata</taxon>
        <taxon>Craniata</taxon>
        <taxon>Vertebrata</taxon>
        <taxon>Euteleostomi</taxon>
        <taxon>Mammalia</taxon>
        <taxon>Eutheria</taxon>
        <taxon>Euarchontoglires</taxon>
        <taxon>Primates</taxon>
        <taxon>Haplorrhini</taxon>
        <taxon>Catarrhini</taxon>
        <taxon>Hominidae</taxon>
        <taxon>Pongo</taxon>
    </lineage>
</organism>
<feature type="initiator methionine" description="Removed" evidence="2">
    <location>
        <position position="1"/>
    </location>
</feature>
<feature type="chain" id="PRO_0000223498" description="Proteasome activator complex subunit 3">
    <location>
        <begin position="2"/>
        <end position="254"/>
    </location>
</feature>
<feature type="modified residue" description="N-acetylalanine" evidence="2">
    <location>
        <position position="2"/>
    </location>
</feature>
<feature type="modified residue" description="Phosphoserine" evidence="2">
    <location>
        <position position="17"/>
    </location>
</feature>
<feature type="modified residue" description="Phosphoserine" evidence="2">
    <location>
        <position position="24"/>
    </location>
</feature>
<feature type="modified residue" description="N6-acetyllysine; by P300/CBP" evidence="2">
    <location>
        <position position="195"/>
    </location>
</feature>
<feature type="modified residue" description="Phosphoserine; by CHEK2" evidence="2">
    <location>
        <position position="247"/>
    </location>
</feature>
<comment type="function">
    <text evidence="2">Subunit of the 11S REG-gamma (also called PA28-gamma) proteasome regulator, a doughnut-shaped homoheptamer which associates with the proteasome. 11S REG-gamma activates the trypsin-like catalytic subunit of the proteasome but inhibits the chymotrypsin-like and postglutamyl-preferring (PGPH) subunits. Facilitates the MDM2-p53/TP53 interaction which promotes ubiquitination- and MDM2-dependent proteasomal degradation of p53/TP53, limiting its accumulation and resulting in inhibited apoptosis after DNA damage. May also be involved in cell cycle regulation. Mediates CCAR2 and CHEK2-dependent SIRT1 inhibition (By similarity).</text>
</comment>
<comment type="subunit">
    <text evidence="2 3">Homoheptamer; the stability of the heptamer is essential for the specific activation of the trypsine-like subunit and inhibition of the chymotrypsin-like and postglutamyl-preferring (PGPH) subunits of the proteasome. Interacts with p53/TP53, MDM2 and MAP3K3. Associates with the proteasome. Interacts with CCAR2. Interacts with PSME3IP1 (via C-terminus); the interaction is direct and promotes the association of PSME3 with the 20S proteasome. Interacts with COIL; the interaction is inhibited by PSME3IP1.</text>
</comment>
<comment type="subcellular location">
    <subcellularLocation>
        <location evidence="1">Nucleus</location>
    </subcellularLocation>
    <subcellularLocation>
        <location evidence="1">Cytoplasm</location>
    </subcellularLocation>
    <text evidence="1">Localizes to the cytoplasm during mitosis following nuclear envelope breakdown at this distinct stage of the cell cycle which allows its interaction with MAP3K3 kinase.</text>
</comment>
<comment type="domain">
    <text evidence="1">The C-terminal sequences affect heptamer stability and proteasome affinity.</text>
</comment>
<comment type="PTM">
    <text evidence="2 3">Phosphorylated by MAP3K3. Phosphorylation at Ser-247 promotes its association with CCAR2.</text>
</comment>
<comment type="PTM">
    <text evidence="1">Acetylation at the major site Lys-195 is important for oligomerization and ability to degrade its target substrates. Deacetylated by SIRT1 (By similarity).</text>
</comment>
<comment type="similarity">
    <text evidence="4">Belongs to the PA28 family.</text>
</comment>
<evidence type="ECO:0000250" key="1"/>
<evidence type="ECO:0000250" key="2">
    <source>
        <dbReference type="UniProtKB" id="P61289"/>
    </source>
</evidence>
<evidence type="ECO:0000250" key="3">
    <source>
        <dbReference type="UniProtKB" id="P61290"/>
    </source>
</evidence>
<evidence type="ECO:0000305" key="4"/>
<sequence length="254" mass="29492">MASLLKVDQEVKLKVDSFRERITSEAEDLVANFFPKKLLELDSFLKEPILNIHDLTQIHSDMNLPVPDPILLTNSHDGLDGPTYKKRRLDDCEEAFQGTKVFVMPNGMLKSNQQLVDIIEKVKPEIRLLIEKCNTVKMWVQLLIPRIEDGNNFGVSIQEETVAELRTVESEAASYLDQISRYYITRAKLVSKIAKYPHVEDYRRTVTEIDEKEYISLRLIISELRNQYVTLHDMILKNIEKIKRPRSSNAETLY</sequence>
<dbReference type="EMBL" id="CR857225">
    <property type="protein sequence ID" value="CAH89524.1"/>
    <property type="molecule type" value="mRNA"/>
</dbReference>
<dbReference type="RefSeq" id="NP_001124661.1">
    <property type="nucleotide sequence ID" value="NM_001131189.2"/>
</dbReference>
<dbReference type="SMR" id="Q5RFD3"/>
<dbReference type="FunCoup" id="Q5RFD3">
    <property type="interactions" value="4476"/>
</dbReference>
<dbReference type="STRING" id="9601.ENSPPYP00000009413"/>
<dbReference type="Ensembl" id="ENSPPYT00000009791.3">
    <property type="protein sequence ID" value="ENSPPYP00000009413.2"/>
    <property type="gene ID" value="ENSPPYG00000008372.3"/>
</dbReference>
<dbReference type="GeneID" id="100171504"/>
<dbReference type="KEGG" id="pon:100171504"/>
<dbReference type="CTD" id="10197"/>
<dbReference type="eggNOG" id="KOG4470">
    <property type="taxonomic scope" value="Eukaryota"/>
</dbReference>
<dbReference type="GeneTree" id="ENSGT00950000183098"/>
<dbReference type="HOGENOM" id="CLU_062515_1_0_1"/>
<dbReference type="InParanoid" id="Q5RFD3"/>
<dbReference type="OrthoDB" id="6591885at2759"/>
<dbReference type="TreeFam" id="TF106236"/>
<dbReference type="Proteomes" id="UP000001595">
    <property type="component" value="Chromosome 17"/>
</dbReference>
<dbReference type="GO" id="GO:0005737">
    <property type="term" value="C:cytoplasm"/>
    <property type="evidence" value="ECO:0007669"/>
    <property type="project" value="UniProtKB-SubCell"/>
</dbReference>
<dbReference type="GO" id="GO:0005654">
    <property type="term" value="C:nucleoplasm"/>
    <property type="evidence" value="ECO:0007669"/>
    <property type="project" value="TreeGrafter"/>
</dbReference>
<dbReference type="GO" id="GO:0008537">
    <property type="term" value="C:proteasome activator complex"/>
    <property type="evidence" value="ECO:0007669"/>
    <property type="project" value="InterPro"/>
</dbReference>
<dbReference type="GO" id="GO:0061133">
    <property type="term" value="F:endopeptidase activator activity"/>
    <property type="evidence" value="ECO:0007669"/>
    <property type="project" value="TreeGrafter"/>
</dbReference>
<dbReference type="GO" id="GO:0097371">
    <property type="term" value="F:MDM2/MDM4 family protein binding"/>
    <property type="evidence" value="ECO:0000250"/>
    <property type="project" value="UniProtKB"/>
</dbReference>
<dbReference type="GO" id="GO:0002039">
    <property type="term" value="F:p53 binding"/>
    <property type="evidence" value="ECO:0000250"/>
    <property type="project" value="UniProtKB"/>
</dbReference>
<dbReference type="GO" id="GO:0006915">
    <property type="term" value="P:apoptotic process"/>
    <property type="evidence" value="ECO:0007669"/>
    <property type="project" value="UniProtKB-KW"/>
</dbReference>
<dbReference type="GO" id="GO:2001237">
    <property type="term" value="P:negative regulation of extrinsic apoptotic signaling pathway"/>
    <property type="evidence" value="ECO:0000250"/>
    <property type="project" value="UniProtKB"/>
</dbReference>
<dbReference type="GO" id="GO:2000045">
    <property type="term" value="P:regulation of G1/S transition of mitotic cell cycle"/>
    <property type="evidence" value="ECO:0007669"/>
    <property type="project" value="TreeGrafter"/>
</dbReference>
<dbReference type="GO" id="GO:0061136">
    <property type="term" value="P:regulation of proteasomal protein catabolic process"/>
    <property type="evidence" value="ECO:0007669"/>
    <property type="project" value="TreeGrafter"/>
</dbReference>
<dbReference type="FunFam" id="1.20.120.180:FF:000001">
    <property type="entry name" value="Proteasome activator complex subunit 3"/>
    <property type="match status" value="1"/>
</dbReference>
<dbReference type="FunFam" id="1.20.5.120:FF:000001">
    <property type="entry name" value="Proteasome activator complex subunit 3"/>
    <property type="match status" value="1"/>
</dbReference>
<dbReference type="Gene3D" id="1.20.120.180">
    <property type="entry name" value="Proteasome activator pa28, C-terminal domain"/>
    <property type="match status" value="1"/>
</dbReference>
<dbReference type="Gene3D" id="1.20.5.120">
    <property type="entry name" value="Proteasome activator pa28, N-terminal domain"/>
    <property type="match status" value="1"/>
</dbReference>
<dbReference type="InterPro" id="IPR003186">
    <property type="entry name" value="PA28_C"/>
</dbReference>
<dbReference type="InterPro" id="IPR036997">
    <property type="entry name" value="PA28_C_sf"/>
</dbReference>
<dbReference type="InterPro" id="IPR036996">
    <property type="entry name" value="PA28_N_sf"/>
</dbReference>
<dbReference type="InterPro" id="IPR009077">
    <property type="entry name" value="Proteasome_activ_PA28"/>
</dbReference>
<dbReference type="InterPro" id="IPR003185">
    <property type="entry name" value="Proteasome_activ_PA28_N"/>
</dbReference>
<dbReference type="InterPro" id="IPR036252">
    <property type="entry name" value="Proteasome_activ_sf"/>
</dbReference>
<dbReference type="PANTHER" id="PTHR10660:SF4">
    <property type="entry name" value="PROTEASOME ACTIVATOR COMPLEX SUBUNIT 3"/>
    <property type="match status" value="1"/>
</dbReference>
<dbReference type="PANTHER" id="PTHR10660">
    <property type="entry name" value="PROTEASOME REGULATOR PA28"/>
    <property type="match status" value="1"/>
</dbReference>
<dbReference type="Pfam" id="PF02252">
    <property type="entry name" value="PA28_C"/>
    <property type="match status" value="1"/>
</dbReference>
<dbReference type="Pfam" id="PF02251">
    <property type="entry name" value="PA28_N"/>
    <property type="match status" value="1"/>
</dbReference>
<dbReference type="SUPFAM" id="SSF47216">
    <property type="entry name" value="Proteasome activator"/>
    <property type="match status" value="1"/>
</dbReference>
<protein>
    <recommendedName>
        <fullName>Proteasome activator complex subunit 3</fullName>
    </recommendedName>
    <alternativeName>
        <fullName>Activator of multicatalytic protease subunit 3</fullName>
    </alternativeName>
    <alternativeName>
        <fullName>Proteasome activator 28 subunit gamma</fullName>
        <shortName>PA28g</shortName>
        <shortName>PA28gamma</shortName>
    </alternativeName>
</protein>
<proteinExistence type="evidence at transcript level"/>